<name>HEM3_BLOPB</name>
<proteinExistence type="inferred from homology"/>
<feature type="chain" id="PRO_0000304215" description="Porphobilinogen deaminase">
    <location>
        <begin position="1"/>
        <end position="300"/>
    </location>
</feature>
<feature type="modified residue" description="S-(dipyrrolylmethanemethyl)cysteine" evidence="1">
    <location>
        <position position="242"/>
    </location>
</feature>
<gene>
    <name evidence="1" type="primary">hemC</name>
    <name type="ordered locus">BPEN_601</name>
</gene>
<protein>
    <recommendedName>
        <fullName evidence="1">Porphobilinogen deaminase</fullName>
        <shortName evidence="1">PBG</shortName>
        <ecNumber evidence="1">2.5.1.61</ecNumber>
    </recommendedName>
    <alternativeName>
        <fullName evidence="1">Hydroxymethylbilane synthase</fullName>
        <shortName evidence="1">HMBS</shortName>
    </alternativeName>
    <alternativeName>
        <fullName evidence="1">Pre-uroporphyrinogen synthase</fullName>
    </alternativeName>
</protein>
<organism>
    <name type="scientific">Blochmanniella pennsylvanica (strain BPEN)</name>
    <dbReference type="NCBI Taxonomy" id="291272"/>
    <lineage>
        <taxon>Bacteria</taxon>
        <taxon>Pseudomonadati</taxon>
        <taxon>Pseudomonadota</taxon>
        <taxon>Gammaproteobacteria</taxon>
        <taxon>Enterobacterales</taxon>
        <taxon>Enterobacteriaceae</taxon>
        <taxon>ant endosymbionts</taxon>
        <taxon>Candidatus Blochmanniella</taxon>
    </lineage>
</organism>
<evidence type="ECO:0000255" key="1">
    <source>
        <dbReference type="HAMAP-Rule" id="MF_00260"/>
    </source>
</evidence>
<keyword id="KW-0627">Porphyrin biosynthesis</keyword>
<keyword id="KW-1185">Reference proteome</keyword>
<keyword id="KW-0808">Transferase</keyword>
<comment type="function">
    <text evidence="1">Tetrapolymerization of the monopyrrole PBG into the hydroxymethylbilane pre-uroporphyrinogen in several discrete steps.</text>
</comment>
<comment type="catalytic activity">
    <reaction evidence="1">
        <text>4 porphobilinogen + H2O = hydroxymethylbilane + 4 NH4(+)</text>
        <dbReference type="Rhea" id="RHEA:13185"/>
        <dbReference type="ChEBI" id="CHEBI:15377"/>
        <dbReference type="ChEBI" id="CHEBI:28938"/>
        <dbReference type="ChEBI" id="CHEBI:57845"/>
        <dbReference type="ChEBI" id="CHEBI:58126"/>
        <dbReference type="EC" id="2.5.1.61"/>
    </reaction>
</comment>
<comment type="cofactor">
    <cofactor evidence="1">
        <name>dipyrromethane</name>
        <dbReference type="ChEBI" id="CHEBI:60342"/>
    </cofactor>
    <text evidence="1">Binds 1 dipyrromethane group covalently.</text>
</comment>
<comment type="pathway">
    <text evidence="1">Porphyrin-containing compound metabolism; protoporphyrin-IX biosynthesis; coproporphyrinogen-III from 5-aminolevulinate: step 2/4.</text>
</comment>
<comment type="subunit">
    <text evidence="1">Monomer.</text>
</comment>
<comment type="miscellaneous">
    <text evidence="1">The porphobilinogen subunits are added to the dipyrromethane group.</text>
</comment>
<comment type="similarity">
    <text evidence="1">Belongs to the HMBS family.</text>
</comment>
<dbReference type="EC" id="2.5.1.61" evidence="1"/>
<dbReference type="EMBL" id="CP000016">
    <property type="protein sequence ID" value="AAZ41206.1"/>
    <property type="molecule type" value="Genomic_DNA"/>
</dbReference>
<dbReference type="RefSeq" id="WP_011283117.1">
    <property type="nucleotide sequence ID" value="NC_007292.1"/>
</dbReference>
<dbReference type="SMR" id="Q491Z6"/>
<dbReference type="STRING" id="291272.BPEN_601"/>
<dbReference type="KEGG" id="bpn:BPEN_601"/>
<dbReference type="eggNOG" id="COG0181">
    <property type="taxonomic scope" value="Bacteria"/>
</dbReference>
<dbReference type="HOGENOM" id="CLU_019704_0_2_6"/>
<dbReference type="OrthoDB" id="9810298at2"/>
<dbReference type="UniPathway" id="UPA00251">
    <property type="reaction ID" value="UER00319"/>
</dbReference>
<dbReference type="Proteomes" id="UP000007794">
    <property type="component" value="Chromosome"/>
</dbReference>
<dbReference type="GO" id="GO:0005737">
    <property type="term" value="C:cytoplasm"/>
    <property type="evidence" value="ECO:0007669"/>
    <property type="project" value="TreeGrafter"/>
</dbReference>
<dbReference type="GO" id="GO:0004418">
    <property type="term" value="F:hydroxymethylbilane synthase activity"/>
    <property type="evidence" value="ECO:0007669"/>
    <property type="project" value="UniProtKB-UniRule"/>
</dbReference>
<dbReference type="GO" id="GO:0006782">
    <property type="term" value="P:protoporphyrinogen IX biosynthetic process"/>
    <property type="evidence" value="ECO:0007669"/>
    <property type="project" value="UniProtKB-UniRule"/>
</dbReference>
<dbReference type="FunFam" id="3.40.190.10:FF:000005">
    <property type="entry name" value="Porphobilinogen deaminase"/>
    <property type="match status" value="1"/>
</dbReference>
<dbReference type="Gene3D" id="3.40.190.10">
    <property type="entry name" value="Periplasmic binding protein-like II"/>
    <property type="match status" value="2"/>
</dbReference>
<dbReference type="Gene3D" id="3.30.160.40">
    <property type="entry name" value="Porphobilinogen deaminase, C-terminal domain"/>
    <property type="match status" value="1"/>
</dbReference>
<dbReference type="HAMAP" id="MF_00260">
    <property type="entry name" value="Porphobil_deam"/>
    <property type="match status" value="1"/>
</dbReference>
<dbReference type="InterPro" id="IPR000860">
    <property type="entry name" value="HemC"/>
</dbReference>
<dbReference type="InterPro" id="IPR022417">
    <property type="entry name" value="Porphobilin_deaminase_N"/>
</dbReference>
<dbReference type="InterPro" id="IPR022418">
    <property type="entry name" value="Porphobilinogen_deaminase_C"/>
</dbReference>
<dbReference type="InterPro" id="IPR036803">
    <property type="entry name" value="Porphobilinogen_deaminase_C_sf"/>
</dbReference>
<dbReference type="NCBIfam" id="TIGR00212">
    <property type="entry name" value="hemC"/>
    <property type="match status" value="1"/>
</dbReference>
<dbReference type="PANTHER" id="PTHR11557">
    <property type="entry name" value="PORPHOBILINOGEN DEAMINASE"/>
    <property type="match status" value="1"/>
</dbReference>
<dbReference type="PANTHER" id="PTHR11557:SF0">
    <property type="entry name" value="PORPHOBILINOGEN DEAMINASE"/>
    <property type="match status" value="1"/>
</dbReference>
<dbReference type="Pfam" id="PF01379">
    <property type="entry name" value="Porphobil_deam"/>
    <property type="match status" value="1"/>
</dbReference>
<dbReference type="Pfam" id="PF03900">
    <property type="entry name" value="Porphobil_deamC"/>
    <property type="match status" value="1"/>
</dbReference>
<dbReference type="PIRSF" id="PIRSF001438">
    <property type="entry name" value="4pyrrol_synth_OHMeBilane_synth"/>
    <property type="match status" value="1"/>
</dbReference>
<dbReference type="PRINTS" id="PR00151">
    <property type="entry name" value="PORPHBDMNASE"/>
</dbReference>
<dbReference type="SUPFAM" id="SSF53850">
    <property type="entry name" value="Periplasmic binding protein-like II"/>
    <property type="match status" value="1"/>
</dbReference>
<dbReference type="SUPFAM" id="SSF54782">
    <property type="entry name" value="Porphobilinogen deaminase (hydroxymethylbilane synthase), C-terminal domain"/>
    <property type="match status" value="1"/>
</dbReference>
<reference key="1">
    <citation type="journal article" date="2005" name="Genome Res.">
        <title>Genome sequence of Blochmannia pennsylvanicus indicates parallel evolutionary trends among bacterial mutualists of insects.</title>
        <authorList>
            <person name="Degnan P.H."/>
            <person name="Lazarus A.B."/>
            <person name="Wernegreen J.J."/>
        </authorList>
    </citation>
    <scope>NUCLEOTIDE SEQUENCE [LARGE SCALE GENOMIC DNA]</scope>
    <source>
        <strain>BPEN</strain>
    </source>
</reference>
<sequence>MKNKILKIATRKSQLAICQAQYVHNELKHYHPTLSIELMPIVTTGDKFLNIDAKNKIKKGAFIKELEHALINFRADIAVHSMKDITVPLPDELTLPVLCKRNDPRDAFVSLKYPNIDTLPIGSVIGTSSLRRQCQIRAHRPDLVVSNLRGNIDTRLKKLQYGQYDAIVLAVAGLQRLQLHEYIRVHIDPSDLLPAMGQGVIAIECRSNDADILSLLSPLYHQETSFRVRAERAVTTYLESYCHLPIASYAEIEEDQIWLRALIGLPDGSKIIRTEGRAPLDQAEKLGFILAEDLLIKFKR</sequence>
<accession>Q491Z6</accession>